<gene>
    <name evidence="1" type="primary">yhbQ</name>
    <name type="ordered locus">UTI89_C3582</name>
</gene>
<proteinExistence type="inferred from homology"/>
<reference key="1">
    <citation type="journal article" date="2006" name="Proc. Natl. Acad. Sci. U.S.A.">
        <title>Identification of genes subject to positive selection in uropathogenic strains of Escherichia coli: a comparative genomics approach.</title>
        <authorList>
            <person name="Chen S.L."/>
            <person name="Hung C.-S."/>
            <person name="Xu J."/>
            <person name="Reigstad C.S."/>
            <person name="Magrini V."/>
            <person name="Sabo A."/>
            <person name="Blasiar D."/>
            <person name="Bieri T."/>
            <person name="Meyer R.R."/>
            <person name="Ozersky P."/>
            <person name="Armstrong J.R."/>
            <person name="Fulton R.S."/>
            <person name="Latreille J.P."/>
            <person name="Spieth J."/>
            <person name="Hooton T.M."/>
            <person name="Mardis E.R."/>
            <person name="Hultgren S.J."/>
            <person name="Gordon J.I."/>
        </authorList>
    </citation>
    <scope>NUCLEOTIDE SEQUENCE [LARGE SCALE GENOMIC DNA]</scope>
    <source>
        <strain>UTI89 / UPEC</strain>
    </source>
</reference>
<sequence length="100" mass="11284">MTPWFLYLIRTADNKLYTGITTDVERRYQQHQSGKGAKALRGKGELTLAFSAPVGDRSLALRAEYRVKQLTKRQKERLVAEGAVFAELLSSLQTPEIKSD</sequence>
<comment type="similarity">
    <text evidence="1">Belongs to the UPF0213 family.</text>
</comment>
<protein>
    <recommendedName>
        <fullName evidence="1">UPF0213 protein YhbQ</fullName>
    </recommendedName>
</protein>
<feature type="chain" id="PRO_1000063665" description="UPF0213 protein YhbQ">
    <location>
        <begin position="1"/>
        <end position="100"/>
    </location>
</feature>
<feature type="domain" description="GIY-YIG" evidence="1">
    <location>
        <begin position="2"/>
        <end position="77"/>
    </location>
</feature>
<name>YHBQ_ECOUT</name>
<evidence type="ECO:0000255" key="1">
    <source>
        <dbReference type="HAMAP-Rule" id="MF_01029"/>
    </source>
</evidence>
<organism>
    <name type="scientific">Escherichia coli (strain UTI89 / UPEC)</name>
    <dbReference type="NCBI Taxonomy" id="364106"/>
    <lineage>
        <taxon>Bacteria</taxon>
        <taxon>Pseudomonadati</taxon>
        <taxon>Pseudomonadota</taxon>
        <taxon>Gammaproteobacteria</taxon>
        <taxon>Enterobacterales</taxon>
        <taxon>Enterobacteriaceae</taxon>
        <taxon>Escherichia</taxon>
    </lineage>
</organism>
<dbReference type="EMBL" id="CP000243">
    <property type="protein sequence ID" value="ABE09028.1"/>
    <property type="molecule type" value="Genomic_DNA"/>
</dbReference>
<dbReference type="RefSeq" id="WP_000189322.1">
    <property type="nucleotide sequence ID" value="NZ_CP064825.1"/>
</dbReference>
<dbReference type="SMR" id="Q1R6I6"/>
<dbReference type="KEGG" id="eci:UTI89_C3582"/>
<dbReference type="HOGENOM" id="CLU_135650_0_1_6"/>
<dbReference type="Proteomes" id="UP000001952">
    <property type="component" value="Chromosome"/>
</dbReference>
<dbReference type="CDD" id="cd10456">
    <property type="entry name" value="GIY-YIG_UPF0213"/>
    <property type="match status" value="1"/>
</dbReference>
<dbReference type="FunFam" id="3.40.1440.10:FF:000002">
    <property type="entry name" value="UPF0213 protein YhbQ"/>
    <property type="match status" value="1"/>
</dbReference>
<dbReference type="Gene3D" id="3.40.1440.10">
    <property type="entry name" value="GIY-YIG endonuclease"/>
    <property type="match status" value="1"/>
</dbReference>
<dbReference type="HAMAP" id="MF_01029">
    <property type="entry name" value="UPF0213"/>
    <property type="match status" value="1"/>
</dbReference>
<dbReference type="InterPro" id="IPR000305">
    <property type="entry name" value="GIY-YIG_endonuc"/>
</dbReference>
<dbReference type="InterPro" id="IPR035901">
    <property type="entry name" value="GIY-YIG_endonuc_sf"/>
</dbReference>
<dbReference type="InterPro" id="IPR050190">
    <property type="entry name" value="UPF0213_domain"/>
</dbReference>
<dbReference type="InterPro" id="IPR022992">
    <property type="entry name" value="UPF0213_GIY-YIG_endonuc"/>
</dbReference>
<dbReference type="PANTHER" id="PTHR34477">
    <property type="entry name" value="UPF0213 PROTEIN YHBQ"/>
    <property type="match status" value="1"/>
</dbReference>
<dbReference type="PANTHER" id="PTHR34477:SF1">
    <property type="entry name" value="UPF0213 PROTEIN YHBQ"/>
    <property type="match status" value="1"/>
</dbReference>
<dbReference type="Pfam" id="PF01541">
    <property type="entry name" value="GIY-YIG"/>
    <property type="match status" value="1"/>
</dbReference>
<dbReference type="SMART" id="SM00465">
    <property type="entry name" value="GIYc"/>
    <property type="match status" value="1"/>
</dbReference>
<dbReference type="SUPFAM" id="SSF82771">
    <property type="entry name" value="GIY-YIG endonuclease"/>
    <property type="match status" value="1"/>
</dbReference>
<dbReference type="PROSITE" id="PS50164">
    <property type="entry name" value="GIY_YIG"/>
    <property type="match status" value="1"/>
</dbReference>
<accession>Q1R6I6</accession>